<organism>
    <name type="scientific">Micrococcus luteus (strain ATCC 4698 / DSM 20030 / JCM 1464 / CCM 169 / CCUG 5858 / IAM 1056 / NBRC 3333 / NCIMB 9278 / NCTC 2665 / VKM Ac-2230)</name>
    <name type="common">Micrococcus lysodeikticus</name>
    <dbReference type="NCBI Taxonomy" id="465515"/>
    <lineage>
        <taxon>Bacteria</taxon>
        <taxon>Bacillati</taxon>
        <taxon>Actinomycetota</taxon>
        <taxon>Actinomycetes</taxon>
        <taxon>Micrococcales</taxon>
        <taxon>Micrococcaceae</taxon>
        <taxon>Micrococcus</taxon>
    </lineage>
</organism>
<protein>
    <recommendedName>
        <fullName evidence="1">tRNA-specific 2-thiouridylase MnmA</fullName>
        <ecNumber evidence="1">2.8.1.13</ecNumber>
    </recommendedName>
</protein>
<dbReference type="EC" id="2.8.1.13" evidence="1"/>
<dbReference type="EMBL" id="CP001628">
    <property type="protein sequence ID" value="ACS30974.1"/>
    <property type="molecule type" value="Genomic_DNA"/>
</dbReference>
<dbReference type="RefSeq" id="WP_012750982.1">
    <property type="nucleotide sequence ID" value="NC_012803.1"/>
</dbReference>
<dbReference type="SMR" id="C5CB51"/>
<dbReference type="STRING" id="465515.Mlut_14800"/>
<dbReference type="EnsemblBacteria" id="ACS30974">
    <property type="protein sequence ID" value="ACS30974"/>
    <property type="gene ID" value="Mlut_14800"/>
</dbReference>
<dbReference type="GeneID" id="93343356"/>
<dbReference type="KEGG" id="mlu:Mlut_14800"/>
<dbReference type="PATRIC" id="fig|465515.4.peg.1417"/>
<dbReference type="eggNOG" id="COG0482">
    <property type="taxonomic scope" value="Bacteria"/>
</dbReference>
<dbReference type="HOGENOM" id="CLU_035188_0_2_11"/>
<dbReference type="Proteomes" id="UP000000738">
    <property type="component" value="Chromosome"/>
</dbReference>
<dbReference type="GO" id="GO:0005737">
    <property type="term" value="C:cytoplasm"/>
    <property type="evidence" value="ECO:0007669"/>
    <property type="project" value="UniProtKB-SubCell"/>
</dbReference>
<dbReference type="GO" id="GO:0005524">
    <property type="term" value="F:ATP binding"/>
    <property type="evidence" value="ECO:0007669"/>
    <property type="project" value="UniProtKB-KW"/>
</dbReference>
<dbReference type="GO" id="GO:0000049">
    <property type="term" value="F:tRNA binding"/>
    <property type="evidence" value="ECO:0007669"/>
    <property type="project" value="UniProtKB-KW"/>
</dbReference>
<dbReference type="GO" id="GO:0103016">
    <property type="term" value="F:tRNA-uridine 2-sulfurtransferase activity"/>
    <property type="evidence" value="ECO:0007669"/>
    <property type="project" value="UniProtKB-EC"/>
</dbReference>
<dbReference type="GO" id="GO:0002143">
    <property type="term" value="P:tRNA wobble position uridine thiolation"/>
    <property type="evidence" value="ECO:0007669"/>
    <property type="project" value="TreeGrafter"/>
</dbReference>
<dbReference type="CDD" id="cd01998">
    <property type="entry name" value="MnmA_TRMU-like"/>
    <property type="match status" value="1"/>
</dbReference>
<dbReference type="FunFam" id="2.30.30.280:FF:000001">
    <property type="entry name" value="tRNA-specific 2-thiouridylase MnmA"/>
    <property type="match status" value="1"/>
</dbReference>
<dbReference type="FunFam" id="3.40.50.620:FF:000057">
    <property type="entry name" value="tRNA-specific 2-thiouridylase MnmA"/>
    <property type="match status" value="1"/>
</dbReference>
<dbReference type="Gene3D" id="2.30.30.280">
    <property type="entry name" value="Adenine nucleotide alpha hydrolases-like domains"/>
    <property type="match status" value="1"/>
</dbReference>
<dbReference type="Gene3D" id="3.40.50.620">
    <property type="entry name" value="HUPs"/>
    <property type="match status" value="1"/>
</dbReference>
<dbReference type="Gene3D" id="2.40.30.10">
    <property type="entry name" value="Translation factors"/>
    <property type="match status" value="1"/>
</dbReference>
<dbReference type="HAMAP" id="MF_00144">
    <property type="entry name" value="tRNA_thiouridyl_MnmA"/>
    <property type="match status" value="1"/>
</dbReference>
<dbReference type="InterPro" id="IPR004506">
    <property type="entry name" value="MnmA-like"/>
</dbReference>
<dbReference type="InterPro" id="IPR046885">
    <property type="entry name" value="MnmA-like_C"/>
</dbReference>
<dbReference type="InterPro" id="IPR046884">
    <property type="entry name" value="MnmA-like_central"/>
</dbReference>
<dbReference type="InterPro" id="IPR023382">
    <property type="entry name" value="MnmA-like_central_sf"/>
</dbReference>
<dbReference type="InterPro" id="IPR014729">
    <property type="entry name" value="Rossmann-like_a/b/a_fold"/>
</dbReference>
<dbReference type="NCBIfam" id="NF001138">
    <property type="entry name" value="PRK00143.1"/>
    <property type="match status" value="1"/>
</dbReference>
<dbReference type="NCBIfam" id="TIGR00420">
    <property type="entry name" value="trmU"/>
    <property type="match status" value="1"/>
</dbReference>
<dbReference type="PANTHER" id="PTHR11933:SF5">
    <property type="entry name" value="MITOCHONDRIAL TRNA-SPECIFIC 2-THIOURIDYLASE 1"/>
    <property type="match status" value="1"/>
</dbReference>
<dbReference type="PANTHER" id="PTHR11933">
    <property type="entry name" value="TRNA 5-METHYLAMINOMETHYL-2-THIOURIDYLATE -METHYLTRANSFERASE"/>
    <property type="match status" value="1"/>
</dbReference>
<dbReference type="Pfam" id="PF03054">
    <property type="entry name" value="tRNA_Me_trans"/>
    <property type="match status" value="1"/>
</dbReference>
<dbReference type="Pfam" id="PF20258">
    <property type="entry name" value="tRNA_Me_trans_C"/>
    <property type="match status" value="1"/>
</dbReference>
<dbReference type="Pfam" id="PF20259">
    <property type="entry name" value="tRNA_Me_trans_M"/>
    <property type="match status" value="1"/>
</dbReference>
<dbReference type="SUPFAM" id="SSF52402">
    <property type="entry name" value="Adenine nucleotide alpha hydrolases-like"/>
    <property type="match status" value="1"/>
</dbReference>
<reference key="1">
    <citation type="journal article" date="2010" name="J. Bacteriol.">
        <title>Genome sequence of the Fleming strain of Micrococcus luteus, a simple free-living actinobacterium.</title>
        <authorList>
            <person name="Young M."/>
            <person name="Artsatbanov V."/>
            <person name="Beller H.R."/>
            <person name="Chandra G."/>
            <person name="Chater K.F."/>
            <person name="Dover L.G."/>
            <person name="Goh E.B."/>
            <person name="Kahan T."/>
            <person name="Kaprelyants A.S."/>
            <person name="Kyrpides N."/>
            <person name="Lapidus A."/>
            <person name="Lowry S.R."/>
            <person name="Lykidis A."/>
            <person name="Mahillon J."/>
            <person name="Markowitz V."/>
            <person name="Mavromatis K."/>
            <person name="Mukamolova G.V."/>
            <person name="Oren A."/>
            <person name="Rokem J.S."/>
            <person name="Smith M.C."/>
            <person name="Young D.I."/>
            <person name="Greenblatt C.L."/>
        </authorList>
    </citation>
    <scope>NUCLEOTIDE SEQUENCE [LARGE SCALE GENOMIC DNA]</scope>
    <source>
        <strain>ATCC 4698 / DSM 20030 / JCM 1464 / CCM 169 / CCUG 5858 / IAM 1056 / NBRC 3333 / NCIMB 9278 / NCTC 2665 / VKM Ac-2230</strain>
    </source>
</reference>
<feature type="chain" id="PRO_1000203308" description="tRNA-specific 2-thiouridylase MnmA">
    <location>
        <begin position="1"/>
        <end position="378"/>
    </location>
</feature>
<feature type="region of interest" description="Interaction with tRNA" evidence="1">
    <location>
        <begin position="148"/>
        <end position="150"/>
    </location>
</feature>
<feature type="active site" description="Nucleophile" evidence="1">
    <location>
        <position position="101"/>
    </location>
</feature>
<feature type="active site" description="Cysteine persulfide intermediate" evidence="1">
    <location>
        <position position="199"/>
    </location>
</feature>
<feature type="binding site" evidence="1">
    <location>
        <begin position="6"/>
        <end position="13"/>
    </location>
    <ligand>
        <name>ATP</name>
        <dbReference type="ChEBI" id="CHEBI:30616"/>
    </ligand>
</feature>
<feature type="binding site" evidence="1">
    <location>
        <position position="32"/>
    </location>
    <ligand>
        <name>ATP</name>
        <dbReference type="ChEBI" id="CHEBI:30616"/>
    </ligand>
</feature>
<feature type="binding site" evidence="1">
    <location>
        <position position="125"/>
    </location>
    <ligand>
        <name>ATP</name>
        <dbReference type="ChEBI" id="CHEBI:30616"/>
    </ligand>
</feature>
<feature type="site" description="Interaction with tRNA" evidence="1">
    <location>
        <position position="126"/>
    </location>
</feature>
<feature type="site" description="Interaction with tRNA" evidence="1">
    <location>
        <position position="348"/>
    </location>
</feature>
<feature type="disulfide bond" description="Alternate" evidence="1">
    <location>
        <begin position="101"/>
        <end position="199"/>
    </location>
</feature>
<proteinExistence type="inferred from homology"/>
<comment type="function">
    <text evidence="1">Catalyzes the 2-thiolation of uridine at the wobble position (U34) of tRNA, leading to the formation of s(2)U34.</text>
</comment>
<comment type="catalytic activity">
    <reaction evidence="1">
        <text>S-sulfanyl-L-cysteinyl-[protein] + uridine(34) in tRNA + AH2 + ATP = 2-thiouridine(34) in tRNA + L-cysteinyl-[protein] + A + AMP + diphosphate + H(+)</text>
        <dbReference type="Rhea" id="RHEA:47032"/>
        <dbReference type="Rhea" id="RHEA-COMP:10131"/>
        <dbReference type="Rhea" id="RHEA-COMP:11726"/>
        <dbReference type="Rhea" id="RHEA-COMP:11727"/>
        <dbReference type="Rhea" id="RHEA-COMP:11728"/>
        <dbReference type="ChEBI" id="CHEBI:13193"/>
        <dbReference type="ChEBI" id="CHEBI:15378"/>
        <dbReference type="ChEBI" id="CHEBI:17499"/>
        <dbReference type="ChEBI" id="CHEBI:29950"/>
        <dbReference type="ChEBI" id="CHEBI:30616"/>
        <dbReference type="ChEBI" id="CHEBI:33019"/>
        <dbReference type="ChEBI" id="CHEBI:61963"/>
        <dbReference type="ChEBI" id="CHEBI:65315"/>
        <dbReference type="ChEBI" id="CHEBI:87170"/>
        <dbReference type="ChEBI" id="CHEBI:456215"/>
        <dbReference type="EC" id="2.8.1.13"/>
    </reaction>
</comment>
<comment type="subcellular location">
    <subcellularLocation>
        <location evidence="1">Cytoplasm</location>
    </subcellularLocation>
</comment>
<comment type="similarity">
    <text evidence="1">Belongs to the MnmA/TRMU family.</text>
</comment>
<keyword id="KW-0067">ATP-binding</keyword>
<keyword id="KW-0963">Cytoplasm</keyword>
<keyword id="KW-1015">Disulfide bond</keyword>
<keyword id="KW-0547">Nucleotide-binding</keyword>
<keyword id="KW-1185">Reference proteome</keyword>
<keyword id="KW-0694">RNA-binding</keyword>
<keyword id="KW-0808">Transferase</keyword>
<keyword id="KW-0819">tRNA processing</keyword>
<keyword id="KW-0820">tRNA-binding</keyword>
<sequence length="378" mass="40395">MKVLAAMSGGVDSAVAAARAVDAGHDVVGVHLALSRMPGTLRTGSRGCCTIEDASDAWRACERLGIPFYTWDFSERFAEDVVDDFVAEYEAGRTPNPCMRCNERIKFAALLERALELGFDAVCTGHYAAVRPGPDGSLELHRAADDAKDQSYVLGVLTADQLAHCLFPLADTPSKELVRAEAAERGLSVAAKPDSHDICFIPDGDTRGWLAERIDLAPGPIVDPEGQELGTHAGAQAFTVGQRKGLAIGRPAPDGKPRFVLEVRPKENKVVVGGRELLDVDRITGIRPSWAGAPVPEARTGAWFDCALQFRAHGEIVEARARQRADAAGHPGWEIEPARPLRGVAPGQTAVLYRGTRVLGQATIDTARNARLSAPADA</sequence>
<name>MNMA_MICLC</name>
<gene>
    <name evidence="1" type="primary">mnmA</name>
    <name type="ordered locus">Mlut_14800</name>
</gene>
<evidence type="ECO:0000255" key="1">
    <source>
        <dbReference type="HAMAP-Rule" id="MF_00144"/>
    </source>
</evidence>
<accession>C5CB51</accession>